<protein>
    <recommendedName>
        <fullName evidence="1">GTP cyclohydrolase-2</fullName>
        <ecNumber evidence="1">3.5.4.25</ecNumber>
    </recommendedName>
    <alternativeName>
        <fullName evidence="1">GTP cyclohydrolase II</fullName>
    </alternativeName>
</protein>
<feature type="chain" id="PRO_1000203814" description="GTP cyclohydrolase-2">
    <location>
        <begin position="1"/>
        <end position="205"/>
    </location>
</feature>
<feature type="active site" description="Proton acceptor" evidence="1">
    <location>
        <position position="126"/>
    </location>
</feature>
<feature type="active site" description="Nucleophile" evidence="1">
    <location>
        <position position="128"/>
    </location>
</feature>
<feature type="binding site" evidence="1">
    <location>
        <begin position="49"/>
        <end position="53"/>
    </location>
    <ligand>
        <name>GTP</name>
        <dbReference type="ChEBI" id="CHEBI:37565"/>
    </ligand>
</feature>
<feature type="binding site" evidence="1">
    <location>
        <position position="54"/>
    </location>
    <ligand>
        <name>Zn(2+)</name>
        <dbReference type="ChEBI" id="CHEBI:29105"/>
        <note>catalytic</note>
    </ligand>
</feature>
<feature type="binding site" evidence="1">
    <location>
        <position position="65"/>
    </location>
    <ligand>
        <name>Zn(2+)</name>
        <dbReference type="ChEBI" id="CHEBI:29105"/>
        <note>catalytic</note>
    </ligand>
</feature>
<feature type="binding site" evidence="1">
    <location>
        <position position="67"/>
    </location>
    <ligand>
        <name>Zn(2+)</name>
        <dbReference type="ChEBI" id="CHEBI:29105"/>
        <note>catalytic</note>
    </ligand>
</feature>
<feature type="binding site" evidence="1">
    <location>
        <position position="70"/>
    </location>
    <ligand>
        <name>GTP</name>
        <dbReference type="ChEBI" id="CHEBI:37565"/>
    </ligand>
</feature>
<feature type="binding site" evidence="1">
    <location>
        <begin position="92"/>
        <end position="94"/>
    </location>
    <ligand>
        <name>GTP</name>
        <dbReference type="ChEBI" id="CHEBI:37565"/>
    </ligand>
</feature>
<feature type="binding site" evidence="1">
    <location>
        <position position="114"/>
    </location>
    <ligand>
        <name>GTP</name>
        <dbReference type="ChEBI" id="CHEBI:37565"/>
    </ligand>
</feature>
<feature type="binding site" evidence="1">
    <location>
        <position position="149"/>
    </location>
    <ligand>
        <name>GTP</name>
        <dbReference type="ChEBI" id="CHEBI:37565"/>
    </ligand>
</feature>
<feature type="binding site" evidence="1">
    <location>
        <position position="154"/>
    </location>
    <ligand>
        <name>GTP</name>
        <dbReference type="ChEBI" id="CHEBI:37565"/>
    </ligand>
</feature>
<name>RIBA_PSEFS</name>
<proteinExistence type="inferred from homology"/>
<sequence length="205" mass="22327">MPVVFVAASKLPTPFATFTMNGFLEEATGREHVVLSLGDIADGAPVLGRVHSECLTGDALFSQRCDCGSQLEAAMRAIAREGRGVLLYLRQEGRGIGLMNKIRAYELQDGGADTVEANERLGFAADQRDYAICLPMLEHLGVSSLRLMTNNPRKVKALTEMGITVAERVPLHTGHNPHNKLYLATKASKLDHMMGNEHQGEVDRA</sequence>
<accession>C3K2R5</accession>
<dbReference type="EC" id="3.5.4.25" evidence="1"/>
<dbReference type="EMBL" id="AM181176">
    <property type="protein sequence ID" value="CAY52670.1"/>
    <property type="molecule type" value="Genomic_DNA"/>
</dbReference>
<dbReference type="RefSeq" id="WP_015886101.1">
    <property type="nucleotide sequence ID" value="NC_012660.1"/>
</dbReference>
<dbReference type="SMR" id="C3K2R5"/>
<dbReference type="STRING" id="294.SRM1_05103"/>
<dbReference type="PATRIC" id="fig|216595.4.peg.5590"/>
<dbReference type="eggNOG" id="COG0807">
    <property type="taxonomic scope" value="Bacteria"/>
</dbReference>
<dbReference type="HOGENOM" id="CLU_020273_2_1_6"/>
<dbReference type="OrthoDB" id="9793111at2"/>
<dbReference type="UniPathway" id="UPA00275">
    <property type="reaction ID" value="UER00400"/>
</dbReference>
<dbReference type="GO" id="GO:0005829">
    <property type="term" value="C:cytosol"/>
    <property type="evidence" value="ECO:0007669"/>
    <property type="project" value="TreeGrafter"/>
</dbReference>
<dbReference type="GO" id="GO:0005525">
    <property type="term" value="F:GTP binding"/>
    <property type="evidence" value="ECO:0007669"/>
    <property type="project" value="UniProtKB-KW"/>
</dbReference>
<dbReference type="GO" id="GO:0003935">
    <property type="term" value="F:GTP cyclohydrolase II activity"/>
    <property type="evidence" value="ECO:0007669"/>
    <property type="project" value="UniProtKB-UniRule"/>
</dbReference>
<dbReference type="GO" id="GO:0008270">
    <property type="term" value="F:zinc ion binding"/>
    <property type="evidence" value="ECO:0007669"/>
    <property type="project" value="UniProtKB-UniRule"/>
</dbReference>
<dbReference type="GO" id="GO:0009231">
    <property type="term" value="P:riboflavin biosynthetic process"/>
    <property type="evidence" value="ECO:0007669"/>
    <property type="project" value="UniProtKB-UniRule"/>
</dbReference>
<dbReference type="CDD" id="cd00641">
    <property type="entry name" value="GTP_cyclohydro2"/>
    <property type="match status" value="1"/>
</dbReference>
<dbReference type="FunFam" id="3.40.50.10990:FF:000002">
    <property type="entry name" value="GTP cyclohydrolase-2"/>
    <property type="match status" value="1"/>
</dbReference>
<dbReference type="Gene3D" id="3.40.50.10990">
    <property type="entry name" value="GTP cyclohydrolase II"/>
    <property type="match status" value="1"/>
</dbReference>
<dbReference type="HAMAP" id="MF_00179">
    <property type="entry name" value="RibA"/>
    <property type="match status" value="1"/>
</dbReference>
<dbReference type="InterPro" id="IPR032677">
    <property type="entry name" value="GTP_cyclohydro_II"/>
</dbReference>
<dbReference type="InterPro" id="IPR000926">
    <property type="entry name" value="RibA"/>
</dbReference>
<dbReference type="InterPro" id="IPR036144">
    <property type="entry name" value="RibA-like_sf"/>
</dbReference>
<dbReference type="NCBIfam" id="NF001591">
    <property type="entry name" value="PRK00393.1"/>
    <property type="match status" value="1"/>
</dbReference>
<dbReference type="NCBIfam" id="TIGR00505">
    <property type="entry name" value="ribA"/>
    <property type="match status" value="1"/>
</dbReference>
<dbReference type="PANTHER" id="PTHR21327:SF18">
    <property type="entry name" value="3,4-DIHYDROXY-2-BUTANONE 4-PHOSPHATE SYNTHASE"/>
    <property type="match status" value="1"/>
</dbReference>
<dbReference type="PANTHER" id="PTHR21327">
    <property type="entry name" value="GTP CYCLOHYDROLASE II-RELATED"/>
    <property type="match status" value="1"/>
</dbReference>
<dbReference type="Pfam" id="PF00925">
    <property type="entry name" value="GTP_cyclohydro2"/>
    <property type="match status" value="1"/>
</dbReference>
<dbReference type="SUPFAM" id="SSF142695">
    <property type="entry name" value="RibA-like"/>
    <property type="match status" value="1"/>
</dbReference>
<evidence type="ECO:0000255" key="1">
    <source>
        <dbReference type="HAMAP-Rule" id="MF_00179"/>
    </source>
</evidence>
<keyword id="KW-0342">GTP-binding</keyword>
<keyword id="KW-0378">Hydrolase</keyword>
<keyword id="KW-0479">Metal-binding</keyword>
<keyword id="KW-0547">Nucleotide-binding</keyword>
<keyword id="KW-0686">Riboflavin biosynthesis</keyword>
<keyword id="KW-0862">Zinc</keyword>
<gene>
    <name evidence="1" type="primary">ribA</name>
    <name type="ordered locus">PFLU_5466</name>
</gene>
<reference key="1">
    <citation type="journal article" date="2009" name="Genome Biol.">
        <title>Genomic and genetic analyses of diversity and plant interactions of Pseudomonas fluorescens.</title>
        <authorList>
            <person name="Silby M.W."/>
            <person name="Cerdeno-Tarraga A.M."/>
            <person name="Vernikos G.S."/>
            <person name="Giddens S.R."/>
            <person name="Jackson R.W."/>
            <person name="Preston G.M."/>
            <person name="Zhang X.-X."/>
            <person name="Moon C.D."/>
            <person name="Gehrig S.M."/>
            <person name="Godfrey S.A.C."/>
            <person name="Knight C.G."/>
            <person name="Malone J.G."/>
            <person name="Robinson Z."/>
            <person name="Spiers A.J."/>
            <person name="Harris S."/>
            <person name="Challis G.L."/>
            <person name="Yaxley A.M."/>
            <person name="Harris D."/>
            <person name="Seeger K."/>
            <person name="Murphy L."/>
            <person name="Rutter S."/>
            <person name="Squares R."/>
            <person name="Quail M.A."/>
            <person name="Saunders E."/>
            <person name="Mavromatis K."/>
            <person name="Brettin T.S."/>
            <person name="Bentley S.D."/>
            <person name="Hothersall J."/>
            <person name="Stephens E."/>
            <person name="Thomas C.M."/>
            <person name="Parkhill J."/>
            <person name="Levy S.B."/>
            <person name="Rainey P.B."/>
            <person name="Thomson N.R."/>
        </authorList>
    </citation>
    <scope>NUCLEOTIDE SEQUENCE [LARGE SCALE GENOMIC DNA]</scope>
    <source>
        <strain>SBW25</strain>
    </source>
</reference>
<comment type="function">
    <text evidence="1">Catalyzes the conversion of GTP to 2,5-diamino-6-ribosylamino-4(3H)-pyrimidinone 5'-phosphate (DARP), formate and pyrophosphate.</text>
</comment>
<comment type="catalytic activity">
    <reaction evidence="1">
        <text>GTP + 4 H2O = 2,5-diamino-6-hydroxy-4-(5-phosphoribosylamino)-pyrimidine + formate + 2 phosphate + 3 H(+)</text>
        <dbReference type="Rhea" id="RHEA:23704"/>
        <dbReference type="ChEBI" id="CHEBI:15377"/>
        <dbReference type="ChEBI" id="CHEBI:15378"/>
        <dbReference type="ChEBI" id="CHEBI:15740"/>
        <dbReference type="ChEBI" id="CHEBI:37565"/>
        <dbReference type="ChEBI" id="CHEBI:43474"/>
        <dbReference type="ChEBI" id="CHEBI:58614"/>
        <dbReference type="EC" id="3.5.4.25"/>
    </reaction>
</comment>
<comment type="cofactor">
    <cofactor evidence="1">
        <name>Zn(2+)</name>
        <dbReference type="ChEBI" id="CHEBI:29105"/>
    </cofactor>
    <text evidence="1">Binds 1 zinc ion per subunit.</text>
</comment>
<comment type="pathway">
    <text evidence="1">Cofactor biosynthesis; riboflavin biosynthesis; 5-amino-6-(D-ribitylamino)uracil from GTP: step 1/4.</text>
</comment>
<comment type="similarity">
    <text evidence="1">Belongs to the GTP cyclohydrolase II family.</text>
</comment>
<organism>
    <name type="scientific">Pseudomonas fluorescens (strain SBW25)</name>
    <dbReference type="NCBI Taxonomy" id="216595"/>
    <lineage>
        <taxon>Bacteria</taxon>
        <taxon>Pseudomonadati</taxon>
        <taxon>Pseudomonadota</taxon>
        <taxon>Gammaproteobacteria</taxon>
        <taxon>Pseudomonadales</taxon>
        <taxon>Pseudomonadaceae</taxon>
        <taxon>Pseudomonas</taxon>
    </lineage>
</organism>